<protein>
    <recommendedName>
        <fullName evidence="1">Protein E6</fullName>
    </recommendedName>
</protein>
<organismHost>
    <name type="scientific">Homo sapiens</name>
    <name type="common">Human</name>
    <dbReference type="NCBI Taxonomy" id="9606"/>
</organismHost>
<feature type="chain" id="PRO_0000133360" description="Protein E6">
    <location>
        <begin position="1"/>
        <end position="156"/>
    </location>
</feature>
<feature type="zinc finger region" evidence="1">
    <location>
        <begin position="42"/>
        <end position="78"/>
    </location>
</feature>
<feature type="zinc finger region" evidence="1">
    <location>
        <begin position="115"/>
        <end position="151"/>
    </location>
</feature>
<dbReference type="EMBL" id="X56147">
    <property type="protein sequence ID" value="CAA39612.1"/>
    <property type="molecule type" value="Genomic_DNA"/>
</dbReference>
<dbReference type="PIR" id="A43550">
    <property type="entry name" value="W6WL41"/>
</dbReference>
<dbReference type="SMR" id="P27555"/>
<dbReference type="BioGRID" id="3509150">
    <property type="interactions" value="1"/>
</dbReference>
<dbReference type="KEGG" id="vg:1489281"/>
<dbReference type="OrthoDB" id="27353at10239"/>
<dbReference type="Proteomes" id="UP000006367">
    <property type="component" value="Genome"/>
</dbReference>
<dbReference type="GO" id="GO:0030430">
    <property type="term" value="C:host cell cytoplasm"/>
    <property type="evidence" value="ECO:0007669"/>
    <property type="project" value="UniProtKB-SubCell"/>
</dbReference>
<dbReference type="GO" id="GO:0042025">
    <property type="term" value="C:host cell nucleus"/>
    <property type="evidence" value="ECO:0007669"/>
    <property type="project" value="UniProtKB-SubCell"/>
</dbReference>
<dbReference type="GO" id="GO:0003677">
    <property type="term" value="F:DNA binding"/>
    <property type="evidence" value="ECO:0007669"/>
    <property type="project" value="UniProtKB-UniRule"/>
</dbReference>
<dbReference type="GO" id="GO:0008270">
    <property type="term" value="F:zinc ion binding"/>
    <property type="evidence" value="ECO:0007669"/>
    <property type="project" value="UniProtKB-KW"/>
</dbReference>
<dbReference type="GO" id="GO:0006351">
    <property type="term" value="P:DNA-templated transcription"/>
    <property type="evidence" value="ECO:0007669"/>
    <property type="project" value="UniProtKB-UniRule"/>
</dbReference>
<dbReference type="GO" id="GO:0006355">
    <property type="term" value="P:regulation of DNA-templated transcription"/>
    <property type="evidence" value="ECO:0007669"/>
    <property type="project" value="UniProtKB-UniRule"/>
</dbReference>
<dbReference type="GO" id="GO:0052150">
    <property type="term" value="P:symbiont-mediated perturbation of host apoptosis"/>
    <property type="evidence" value="ECO:0007669"/>
    <property type="project" value="UniProtKB-KW"/>
</dbReference>
<dbReference type="GO" id="GO:0039648">
    <property type="term" value="P:symbiont-mediated perturbation of host ubiquitin-like protein modification"/>
    <property type="evidence" value="ECO:0007669"/>
    <property type="project" value="UniProtKB-UniRule"/>
</dbReference>
<dbReference type="GO" id="GO:0052170">
    <property type="term" value="P:symbiont-mediated suppression of host innate immune response"/>
    <property type="evidence" value="ECO:0007669"/>
    <property type="project" value="UniProtKB-KW"/>
</dbReference>
<dbReference type="GO" id="GO:0039502">
    <property type="term" value="P:symbiont-mediated suppression of host type I interferon-mediated signaling pathway"/>
    <property type="evidence" value="ECO:0007669"/>
    <property type="project" value="UniProtKB-UniRule"/>
</dbReference>
<dbReference type="Gene3D" id="3.30.240.40">
    <property type="entry name" value="E6 early regulatory protein"/>
    <property type="match status" value="2"/>
</dbReference>
<dbReference type="HAMAP" id="MF_04006">
    <property type="entry name" value="HPV_E6"/>
    <property type="match status" value="1"/>
</dbReference>
<dbReference type="InterPro" id="IPR001334">
    <property type="entry name" value="E6"/>
</dbReference>
<dbReference type="InterPro" id="IPR038575">
    <property type="entry name" value="E6_sf"/>
</dbReference>
<dbReference type="Pfam" id="PF00518">
    <property type="entry name" value="E6"/>
    <property type="match status" value="1"/>
</dbReference>
<dbReference type="SUPFAM" id="SSF161229">
    <property type="entry name" value="E6 C-terminal domain-like"/>
    <property type="match status" value="2"/>
</dbReference>
<organism>
    <name type="scientific">Human papillomavirus type 41</name>
    <dbReference type="NCBI Taxonomy" id="10589"/>
    <lineage>
        <taxon>Viruses</taxon>
        <taxon>Monodnaviria</taxon>
        <taxon>Shotokuvirae</taxon>
        <taxon>Cossaviricota</taxon>
        <taxon>Papovaviricetes</taxon>
        <taxon>Zurhausenvirales</taxon>
        <taxon>Papillomaviridae</taxon>
        <taxon>Firstpapillomavirinae</taxon>
        <taxon>Nupapillomavirus</taxon>
        <taxon>Nupapillomavirus 1</taxon>
    </lineage>
</organism>
<gene>
    <name evidence="1" type="primary">E6</name>
</gene>
<proteinExistence type="inferred from homology"/>
<evidence type="ECO:0000255" key="1">
    <source>
        <dbReference type="HAMAP-Rule" id="MF_04006"/>
    </source>
</evidence>
<evidence type="ECO:0000305" key="2"/>
<keyword id="KW-0010">Activator</keyword>
<keyword id="KW-0238">DNA-binding</keyword>
<keyword id="KW-0244">Early protein</keyword>
<keyword id="KW-1035">Host cytoplasm</keyword>
<keyword id="KW-1048">Host nucleus</keyword>
<keyword id="KW-0945">Host-virus interaction</keyword>
<keyword id="KW-1090">Inhibition of host innate immune response by virus</keyword>
<keyword id="KW-0479">Metal-binding</keyword>
<keyword id="KW-1119">Modulation of host cell apoptosis by virus</keyword>
<keyword id="KW-1185">Reference proteome</keyword>
<keyword id="KW-0804">Transcription</keyword>
<keyword id="KW-0805">Transcription regulation</keyword>
<keyword id="KW-0899">Viral immunoevasion</keyword>
<keyword id="KW-0862">Zinc</keyword>
<keyword id="KW-0863">Zinc-finger</keyword>
<reference key="1">
    <citation type="journal article" date="1991" name="Virus Res.">
        <title>Nucleotide sequence of human papillomavirus (HPV) type 41: an unusual HPV type without a typical E2 binding site consensus sequence.</title>
        <authorList>
            <person name="Hirt L."/>
            <person name="Hirsch-Behnam A."/>
            <person name="de Villiers E.M."/>
        </authorList>
    </citation>
    <scope>NUCLEOTIDE SEQUENCE [GENOMIC DNA]</scope>
</reference>
<name>VE6_HPV41</name>
<sequence length="156" mass="17302">MASTSGVGSVGPASCCETQKPHTIRELCLAQQITYPCIQLCCHYCYKILSVLDIYAFDQSCLYLSWGEGGPTGICSQCTRVLARLEFTARHEVSCAASRLPHFIGQSLSDLEVRCVRCLALLQSVEKDYILREDLSVHRIGGIWRGTCVRCMVGLY</sequence>
<comment type="function">
    <text evidence="1">Plays a major role in the induction and maintenance of cellular transformation. E6 associates with host UBE3A/E6-AP ubiquitin-protein ligase and modulates its activity. Protects host keratinocytes from apoptosis by mediating the degradation of host BAK1. May also inhibit host immune response.</text>
</comment>
<comment type="subunit">
    <text evidence="1">Forms homodimers. Interacts with ubiquitin-protein ligase UBE3A/E6-AP; this interaction stimulates UBE3A ubiquitin activity. Interacts with host BAK1.</text>
</comment>
<comment type="subcellular location">
    <subcellularLocation>
        <location evidence="1">Host cytoplasm</location>
    </subcellularLocation>
    <subcellularLocation>
        <location evidence="1">Host nucleus</location>
    </subcellularLocation>
</comment>
<comment type="similarity">
    <text evidence="1 2">Belongs to the papillomaviridae E6 protein family.</text>
</comment>
<accession>P27555</accession>